<dbReference type="EMBL" id="BC013706">
    <property type="protein sequence ID" value="AAH13706.1"/>
    <property type="molecule type" value="mRNA"/>
</dbReference>
<dbReference type="EMBL" id="BC064081">
    <property type="protein sequence ID" value="AAH64081.1"/>
    <property type="molecule type" value="mRNA"/>
</dbReference>
<dbReference type="CCDS" id="CCDS49750.1"/>
<dbReference type="RefSeq" id="NP_663334.1">
    <property type="nucleotide sequence ID" value="NM_145359.2"/>
</dbReference>
<dbReference type="SMR" id="Q6P3B2"/>
<dbReference type="FunCoup" id="Q6P3B2">
    <property type="interactions" value="13"/>
</dbReference>
<dbReference type="STRING" id="10090.ENSMUSP00000037809"/>
<dbReference type="GlyGen" id="Q6P3B2">
    <property type="glycosylation" value="2 sites"/>
</dbReference>
<dbReference type="PhosphoSitePlus" id="Q6P3B2"/>
<dbReference type="PaxDb" id="10090-ENSMUSP00000037809"/>
<dbReference type="ProteomicsDB" id="297781"/>
<dbReference type="Antibodypedia" id="68119">
    <property type="antibodies" value="12 antibodies from 7 providers"/>
</dbReference>
<dbReference type="Ensembl" id="ENSMUST00000037843.7">
    <property type="protein sequence ID" value="ENSMUSP00000037809.7"/>
    <property type="gene ID" value="ENSMUSG00000039568.7"/>
</dbReference>
<dbReference type="GeneID" id="207740"/>
<dbReference type="KEGG" id="mmu:207740"/>
<dbReference type="UCSC" id="uc007yao.2">
    <property type="organism name" value="mouse"/>
</dbReference>
<dbReference type="AGR" id="MGI:1916255"/>
<dbReference type="CTD" id="124402"/>
<dbReference type="MGI" id="MGI:1916255">
    <property type="gene designation" value="Ubald1"/>
</dbReference>
<dbReference type="VEuPathDB" id="HostDB:ENSMUSG00000039568"/>
<dbReference type="eggNOG" id="ENOG502S0GG">
    <property type="taxonomic scope" value="Eukaryota"/>
</dbReference>
<dbReference type="GeneTree" id="ENSGT00390000008825"/>
<dbReference type="HOGENOM" id="CLU_108623_0_0_1"/>
<dbReference type="InParanoid" id="Q6P3B2"/>
<dbReference type="OMA" id="SWGMTPP"/>
<dbReference type="PhylomeDB" id="Q6P3B2"/>
<dbReference type="TreeFam" id="TF329433"/>
<dbReference type="BioGRID-ORCS" id="207740">
    <property type="hits" value="6 hits in 77 CRISPR screens"/>
</dbReference>
<dbReference type="ChiTaRS" id="Ubald1">
    <property type="organism name" value="mouse"/>
</dbReference>
<dbReference type="PRO" id="PR:Q6P3B2"/>
<dbReference type="Proteomes" id="UP000000589">
    <property type="component" value="Chromosome 16"/>
</dbReference>
<dbReference type="RNAct" id="Q6P3B2">
    <property type="molecule type" value="protein"/>
</dbReference>
<dbReference type="Bgee" id="ENSMUSG00000039568">
    <property type="expression patterns" value="Expressed in embryonic brain and 195 other cell types or tissues"/>
</dbReference>
<dbReference type="CDD" id="cd14343">
    <property type="entry name" value="UBA_F100B_like"/>
    <property type="match status" value="1"/>
</dbReference>
<dbReference type="Gene3D" id="1.10.8.10">
    <property type="entry name" value="DNA helicase RuvA subunit, C-terminal domain"/>
    <property type="match status" value="1"/>
</dbReference>
<dbReference type="InterPro" id="IPR009060">
    <property type="entry name" value="UBA-like_sf"/>
</dbReference>
<dbReference type="InterPro" id="IPR054109">
    <property type="entry name" value="UBA_8"/>
</dbReference>
<dbReference type="InterPro" id="IPR039310">
    <property type="entry name" value="UBALD1/2"/>
</dbReference>
<dbReference type="PANTHER" id="PTHR31993:SF5">
    <property type="entry name" value="UBA-LIKE DOMAIN-CONTAINING PROTEIN 1"/>
    <property type="match status" value="1"/>
</dbReference>
<dbReference type="PANTHER" id="PTHR31993">
    <property type="entry name" value="UBA-LIKE DOMAIN-CONTAINING PROTEIN 2"/>
    <property type="match status" value="1"/>
</dbReference>
<dbReference type="Pfam" id="PF22566">
    <property type="entry name" value="UBA_8"/>
    <property type="match status" value="1"/>
</dbReference>
<dbReference type="SUPFAM" id="SSF46934">
    <property type="entry name" value="UBA-like"/>
    <property type="match status" value="1"/>
</dbReference>
<name>UBAD1_MOUSE</name>
<sequence>MSVNMDELKHQVMINQFVLTAGCAADQAKQLLQAAHWQFETALSTFFQETNIPYSHHHQMMCTPANTPATPPNFPDALTMFSRLKASESFHGGGGSSSPMATSATSPPPHFPHATGSFATPSWPTAASPPGGPQQHQPQPPLWTPAPPSPTSDWPPLAPQQATSEPRAHPAMEAER</sequence>
<gene>
    <name type="primary">Ubald1</name>
    <name type="synonym">Fam100a</name>
</gene>
<protein>
    <recommendedName>
        <fullName>UBA-like domain-containing protein 1</fullName>
    </recommendedName>
</protein>
<comment type="similarity">
    <text evidence="2">Belongs to the UBALD family.</text>
</comment>
<proteinExistence type="evidence at transcript level"/>
<keyword id="KW-1185">Reference proteome</keyword>
<feature type="chain" id="PRO_0000236080" description="UBA-like domain-containing protein 1">
    <location>
        <begin position="1"/>
        <end position="176"/>
    </location>
</feature>
<feature type="region of interest" description="Disordered" evidence="1">
    <location>
        <begin position="87"/>
        <end position="176"/>
    </location>
</feature>
<feature type="compositionally biased region" description="Low complexity" evidence="1">
    <location>
        <begin position="120"/>
        <end position="137"/>
    </location>
</feature>
<feature type="compositionally biased region" description="Pro residues" evidence="1">
    <location>
        <begin position="138"/>
        <end position="150"/>
    </location>
</feature>
<feature type="compositionally biased region" description="Basic and acidic residues" evidence="1">
    <location>
        <begin position="166"/>
        <end position="176"/>
    </location>
</feature>
<reference key="1">
    <citation type="journal article" date="2004" name="Genome Res.">
        <title>The status, quality, and expansion of the NIH full-length cDNA project: the Mammalian Gene Collection (MGC).</title>
        <authorList>
            <consortium name="The MGC Project Team"/>
        </authorList>
    </citation>
    <scope>NUCLEOTIDE SEQUENCE [LARGE SCALE MRNA]</scope>
    <source>
        <strain>C57BL/6J</strain>
        <strain>Czech II</strain>
        <tissue>Mammary gland</tissue>
    </source>
</reference>
<organism>
    <name type="scientific">Mus musculus</name>
    <name type="common">Mouse</name>
    <dbReference type="NCBI Taxonomy" id="10090"/>
    <lineage>
        <taxon>Eukaryota</taxon>
        <taxon>Metazoa</taxon>
        <taxon>Chordata</taxon>
        <taxon>Craniata</taxon>
        <taxon>Vertebrata</taxon>
        <taxon>Euteleostomi</taxon>
        <taxon>Mammalia</taxon>
        <taxon>Eutheria</taxon>
        <taxon>Euarchontoglires</taxon>
        <taxon>Glires</taxon>
        <taxon>Rodentia</taxon>
        <taxon>Myomorpha</taxon>
        <taxon>Muroidea</taxon>
        <taxon>Muridae</taxon>
        <taxon>Murinae</taxon>
        <taxon>Mus</taxon>
        <taxon>Mus</taxon>
    </lineage>
</organism>
<evidence type="ECO:0000256" key="1">
    <source>
        <dbReference type="SAM" id="MobiDB-lite"/>
    </source>
</evidence>
<evidence type="ECO:0000305" key="2"/>
<accession>Q6P3B2</accession>
<accession>Q0P6G5</accession>